<comment type="similarity">
    <text evidence="1">Belongs to the papillomaviridae E5 protein family.</text>
</comment>
<evidence type="ECO:0000305" key="1"/>
<reference key="1">
    <citation type="journal article" date="1991" name="Virology">
        <title>Human papillomavirus type 58 DNA sequence.</title>
        <authorList>
            <person name="Kirii Y."/>
            <person name="Iwamoto S."/>
            <person name="Matsukura T."/>
        </authorList>
    </citation>
    <scope>NUCLEOTIDE SEQUENCE [GENOMIC DNA]</scope>
</reference>
<protein>
    <recommendedName>
        <fullName>Probable protein E5</fullName>
    </recommendedName>
</protein>
<name>VE5_HPV58</name>
<organismHost>
    <name type="scientific">Homo sapiens</name>
    <name type="common">Human</name>
    <dbReference type="NCBI Taxonomy" id="9606"/>
</organismHost>
<proteinExistence type="inferred from homology"/>
<feature type="chain" id="PRO_0000133298" description="Probable protein E5">
    <location>
        <begin position="1"/>
        <end position="76"/>
    </location>
</feature>
<sequence>MILPIFVVCFILFLCLCIFLRPLVLSISIYAWLLVLVLLLWVSVGSALRIFFCYLIFLYIPMMCINFHAQYLTQQD</sequence>
<dbReference type="EMBL" id="D90400">
    <property type="protein sequence ID" value="BAA31849.1"/>
    <property type="molecule type" value="Genomic_DNA"/>
</dbReference>
<dbReference type="PIR" id="D36779">
    <property type="entry name" value="W5WL58"/>
</dbReference>
<dbReference type="SMR" id="P26552"/>
<dbReference type="Proteomes" id="UP000007668">
    <property type="component" value="Genome"/>
</dbReference>
<dbReference type="InterPro" id="IPR004270">
    <property type="entry name" value="Papilloma_E5_alpha"/>
</dbReference>
<dbReference type="Pfam" id="PF03025">
    <property type="entry name" value="Papilloma_E5"/>
    <property type="match status" value="1"/>
</dbReference>
<gene>
    <name type="primary">E5</name>
</gene>
<keyword id="KW-0244">Early protein</keyword>
<organism>
    <name type="scientific">Human papillomavirus 58</name>
    <dbReference type="NCBI Taxonomy" id="10598"/>
    <lineage>
        <taxon>Viruses</taxon>
        <taxon>Monodnaviria</taxon>
        <taxon>Shotokuvirae</taxon>
        <taxon>Cossaviricota</taxon>
        <taxon>Papovaviricetes</taxon>
        <taxon>Zurhausenvirales</taxon>
        <taxon>Papillomaviridae</taxon>
        <taxon>Firstpapillomavirinae</taxon>
        <taxon>Alphapapillomavirus</taxon>
        <taxon>Alphapapillomavirus 9</taxon>
    </lineage>
</organism>
<accession>P26552</accession>